<gene>
    <name evidence="1" type="primary">rplM</name>
    <name type="ordered locus">PP_1315</name>
</gene>
<evidence type="ECO:0000255" key="1">
    <source>
        <dbReference type="HAMAP-Rule" id="MF_01366"/>
    </source>
</evidence>
<evidence type="ECO:0000305" key="2"/>
<reference key="1">
    <citation type="journal article" date="2002" name="Environ. Microbiol.">
        <title>Complete genome sequence and comparative analysis of the metabolically versatile Pseudomonas putida KT2440.</title>
        <authorList>
            <person name="Nelson K.E."/>
            <person name="Weinel C."/>
            <person name="Paulsen I.T."/>
            <person name="Dodson R.J."/>
            <person name="Hilbert H."/>
            <person name="Martins dos Santos V.A.P."/>
            <person name="Fouts D.E."/>
            <person name="Gill S.R."/>
            <person name="Pop M."/>
            <person name="Holmes M."/>
            <person name="Brinkac L.M."/>
            <person name="Beanan M.J."/>
            <person name="DeBoy R.T."/>
            <person name="Daugherty S.C."/>
            <person name="Kolonay J.F."/>
            <person name="Madupu R."/>
            <person name="Nelson W.C."/>
            <person name="White O."/>
            <person name="Peterson J.D."/>
            <person name="Khouri H.M."/>
            <person name="Hance I."/>
            <person name="Chris Lee P."/>
            <person name="Holtzapple E.K."/>
            <person name="Scanlan D."/>
            <person name="Tran K."/>
            <person name="Moazzez A."/>
            <person name="Utterback T.R."/>
            <person name="Rizzo M."/>
            <person name="Lee K."/>
            <person name="Kosack D."/>
            <person name="Moestl D."/>
            <person name="Wedler H."/>
            <person name="Lauber J."/>
            <person name="Stjepandic D."/>
            <person name="Hoheisel J."/>
            <person name="Straetz M."/>
            <person name="Heim S."/>
            <person name="Kiewitz C."/>
            <person name="Eisen J.A."/>
            <person name="Timmis K.N."/>
            <person name="Duesterhoeft A."/>
            <person name="Tuemmler B."/>
            <person name="Fraser C.M."/>
        </authorList>
    </citation>
    <scope>NUCLEOTIDE SEQUENCE [LARGE SCALE GENOMIC DNA]</scope>
    <source>
        <strain>ATCC 47054 / DSM 6125 / CFBP 8728 / NCIMB 11950 / KT2440</strain>
    </source>
</reference>
<keyword id="KW-1185">Reference proteome</keyword>
<keyword id="KW-0687">Ribonucleoprotein</keyword>
<keyword id="KW-0689">Ribosomal protein</keyword>
<comment type="function">
    <text evidence="1">This protein is one of the early assembly proteins of the 50S ribosomal subunit, although it is not seen to bind rRNA by itself. It is important during the early stages of 50S assembly.</text>
</comment>
<comment type="subunit">
    <text evidence="1">Part of the 50S ribosomal subunit.</text>
</comment>
<comment type="similarity">
    <text evidence="1">Belongs to the universal ribosomal protein uL13 family.</text>
</comment>
<proteinExistence type="inferred from homology"/>
<dbReference type="EMBL" id="AE015451">
    <property type="protein sequence ID" value="AAN66939.1"/>
    <property type="molecule type" value="Genomic_DNA"/>
</dbReference>
<dbReference type="RefSeq" id="NP_743475.1">
    <property type="nucleotide sequence ID" value="NC_002947.4"/>
</dbReference>
<dbReference type="RefSeq" id="WP_003251819.1">
    <property type="nucleotide sequence ID" value="NZ_CP169744.1"/>
</dbReference>
<dbReference type="SMR" id="Q88N97"/>
<dbReference type="STRING" id="160488.PP_1315"/>
<dbReference type="PaxDb" id="160488-PP_1315"/>
<dbReference type="GeneID" id="83682251"/>
<dbReference type="KEGG" id="ppu:PP_1315"/>
<dbReference type="PATRIC" id="fig|160488.4.peg.1394"/>
<dbReference type="eggNOG" id="COG0102">
    <property type="taxonomic scope" value="Bacteria"/>
</dbReference>
<dbReference type="HOGENOM" id="CLU_082184_2_2_6"/>
<dbReference type="OrthoDB" id="9801330at2"/>
<dbReference type="PhylomeDB" id="Q88N97"/>
<dbReference type="BioCyc" id="PPUT160488:G1G01-1402-MONOMER"/>
<dbReference type="Proteomes" id="UP000000556">
    <property type="component" value="Chromosome"/>
</dbReference>
<dbReference type="GO" id="GO:0022625">
    <property type="term" value="C:cytosolic large ribosomal subunit"/>
    <property type="evidence" value="ECO:0007669"/>
    <property type="project" value="TreeGrafter"/>
</dbReference>
<dbReference type="GO" id="GO:0003729">
    <property type="term" value="F:mRNA binding"/>
    <property type="evidence" value="ECO:0007669"/>
    <property type="project" value="TreeGrafter"/>
</dbReference>
<dbReference type="GO" id="GO:0003735">
    <property type="term" value="F:structural constituent of ribosome"/>
    <property type="evidence" value="ECO:0007669"/>
    <property type="project" value="InterPro"/>
</dbReference>
<dbReference type="GO" id="GO:0017148">
    <property type="term" value="P:negative regulation of translation"/>
    <property type="evidence" value="ECO:0007669"/>
    <property type="project" value="TreeGrafter"/>
</dbReference>
<dbReference type="GO" id="GO:0006412">
    <property type="term" value="P:translation"/>
    <property type="evidence" value="ECO:0007669"/>
    <property type="project" value="UniProtKB-UniRule"/>
</dbReference>
<dbReference type="CDD" id="cd00392">
    <property type="entry name" value="Ribosomal_L13"/>
    <property type="match status" value="1"/>
</dbReference>
<dbReference type="FunFam" id="3.90.1180.10:FF:000001">
    <property type="entry name" value="50S ribosomal protein L13"/>
    <property type="match status" value="1"/>
</dbReference>
<dbReference type="Gene3D" id="3.90.1180.10">
    <property type="entry name" value="Ribosomal protein L13"/>
    <property type="match status" value="1"/>
</dbReference>
<dbReference type="HAMAP" id="MF_01366">
    <property type="entry name" value="Ribosomal_uL13"/>
    <property type="match status" value="1"/>
</dbReference>
<dbReference type="InterPro" id="IPR005822">
    <property type="entry name" value="Ribosomal_uL13"/>
</dbReference>
<dbReference type="InterPro" id="IPR005823">
    <property type="entry name" value="Ribosomal_uL13_bac-type"/>
</dbReference>
<dbReference type="InterPro" id="IPR023563">
    <property type="entry name" value="Ribosomal_uL13_CS"/>
</dbReference>
<dbReference type="InterPro" id="IPR036899">
    <property type="entry name" value="Ribosomal_uL13_sf"/>
</dbReference>
<dbReference type="NCBIfam" id="TIGR01066">
    <property type="entry name" value="rplM_bact"/>
    <property type="match status" value="1"/>
</dbReference>
<dbReference type="PANTHER" id="PTHR11545:SF2">
    <property type="entry name" value="LARGE RIBOSOMAL SUBUNIT PROTEIN UL13M"/>
    <property type="match status" value="1"/>
</dbReference>
<dbReference type="PANTHER" id="PTHR11545">
    <property type="entry name" value="RIBOSOMAL PROTEIN L13"/>
    <property type="match status" value="1"/>
</dbReference>
<dbReference type="Pfam" id="PF00572">
    <property type="entry name" value="Ribosomal_L13"/>
    <property type="match status" value="1"/>
</dbReference>
<dbReference type="PIRSF" id="PIRSF002181">
    <property type="entry name" value="Ribosomal_L13"/>
    <property type="match status" value="1"/>
</dbReference>
<dbReference type="SUPFAM" id="SSF52161">
    <property type="entry name" value="Ribosomal protein L13"/>
    <property type="match status" value="1"/>
</dbReference>
<dbReference type="PROSITE" id="PS00783">
    <property type="entry name" value="RIBOSOMAL_L13"/>
    <property type="match status" value="1"/>
</dbReference>
<name>RL13_PSEPK</name>
<accession>Q88N97</accession>
<sequence length="142" mass="15862">MKTFTAKPETVKREWFVVDAAGQTLGRLATEIATRLRGKHKPEYTPHVDTGDYIVVINAEQVRVTGAKSSDKMYYSHSGFPGGIKEINFEKLIAKAPERVIETAVKGMLPKNPLGRDMYRKLKVYAGAAHPHTAQQPQELKI</sequence>
<protein>
    <recommendedName>
        <fullName evidence="1">Large ribosomal subunit protein uL13</fullName>
    </recommendedName>
    <alternativeName>
        <fullName evidence="2">50S ribosomal protein L13</fullName>
    </alternativeName>
</protein>
<organism>
    <name type="scientific">Pseudomonas putida (strain ATCC 47054 / DSM 6125 / CFBP 8728 / NCIMB 11950 / KT2440)</name>
    <dbReference type="NCBI Taxonomy" id="160488"/>
    <lineage>
        <taxon>Bacteria</taxon>
        <taxon>Pseudomonadati</taxon>
        <taxon>Pseudomonadota</taxon>
        <taxon>Gammaproteobacteria</taxon>
        <taxon>Pseudomonadales</taxon>
        <taxon>Pseudomonadaceae</taxon>
        <taxon>Pseudomonas</taxon>
    </lineage>
</organism>
<feature type="chain" id="PRO_0000261772" description="Large ribosomal subunit protein uL13">
    <location>
        <begin position="1"/>
        <end position="142"/>
    </location>
</feature>